<keyword id="KW-0131">Cell cycle</keyword>
<keyword id="KW-0132">Cell division</keyword>
<keyword id="KW-1003">Cell membrane</keyword>
<keyword id="KW-0133">Cell shape</keyword>
<keyword id="KW-0961">Cell wall biogenesis/degradation</keyword>
<keyword id="KW-0328">Glycosyltransferase</keyword>
<keyword id="KW-0472">Membrane</keyword>
<keyword id="KW-0573">Peptidoglycan synthesis</keyword>
<keyword id="KW-0808">Transferase</keyword>
<gene>
    <name evidence="1" type="primary">murG1</name>
    <name type="ordered locus">BALH_3379</name>
</gene>
<reference key="1">
    <citation type="journal article" date="2007" name="J. Bacteriol.">
        <title>The complete genome sequence of Bacillus thuringiensis Al Hakam.</title>
        <authorList>
            <person name="Challacombe J.F."/>
            <person name="Altherr M.R."/>
            <person name="Xie G."/>
            <person name="Bhotika S.S."/>
            <person name="Brown N."/>
            <person name="Bruce D."/>
            <person name="Campbell C.S."/>
            <person name="Campbell M.L."/>
            <person name="Chen J."/>
            <person name="Chertkov O."/>
            <person name="Cleland C."/>
            <person name="Dimitrijevic M."/>
            <person name="Doggett N.A."/>
            <person name="Fawcett J.J."/>
            <person name="Glavina T."/>
            <person name="Goodwin L.A."/>
            <person name="Green L.D."/>
            <person name="Han C.S."/>
            <person name="Hill K.K."/>
            <person name="Hitchcock P."/>
            <person name="Jackson P.J."/>
            <person name="Keim P."/>
            <person name="Kewalramani A.R."/>
            <person name="Longmire J."/>
            <person name="Lucas S."/>
            <person name="Malfatti S."/>
            <person name="Martinez D."/>
            <person name="McMurry K."/>
            <person name="Meincke L.J."/>
            <person name="Misra M."/>
            <person name="Moseman B.L."/>
            <person name="Mundt M."/>
            <person name="Munk A.C."/>
            <person name="Okinaka R.T."/>
            <person name="Parson-Quintana B."/>
            <person name="Reilly L.P."/>
            <person name="Richardson P."/>
            <person name="Robinson D.L."/>
            <person name="Saunders E."/>
            <person name="Tapia R."/>
            <person name="Tesmer J.G."/>
            <person name="Thayer N."/>
            <person name="Thompson L.S."/>
            <person name="Tice H."/>
            <person name="Ticknor L.O."/>
            <person name="Wills P.L."/>
            <person name="Gilna P."/>
            <person name="Brettin T.S."/>
        </authorList>
    </citation>
    <scope>NUCLEOTIDE SEQUENCE [LARGE SCALE GENOMIC DNA]</scope>
    <source>
        <strain>Al Hakam</strain>
    </source>
</reference>
<name>MURG1_BACAH</name>
<proteinExistence type="inferred from homology"/>
<feature type="chain" id="PRO_0000315066" description="UDP-N-acetylglucosamine--N-acetylmuramyl-(pentapeptide) pyrophosphoryl-undecaprenol N-acetylglucosamine transferase 1">
    <location>
        <begin position="1"/>
        <end position="354"/>
    </location>
</feature>
<feature type="binding site" evidence="1">
    <location>
        <begin position="12"/>
        <end position="14"/>
    </location>
    <ligand>
        <name>UDP-N-acetyl-alpha-D-glucosamine</name>
        <dbReference type="ChEBI" id="CHEBI:57705"/>
    </ligand>
</feature>
<feature type="binding site" evidence="1">
    <location>
        <position position="163"/>
    </location>
    <ligand>
        <name>UDP-N-acetyl-alpha-D-glucosamine</name>
        <dbReference type="ChEBI" id="CHEBI:57705"/>
    </ligand>
</feature>
<feature type="binding site" evidence="1">
    <location>
        <position position="193"/>
    </location>
    <ligand>
        <name>UDP-N-acetyl-alpha-D-glucosamine</name>
        <dbReference type="ChEBI" id="CHEBI:57705"/>
    </ligand>
</feature>
<feature type="binding site" evidence="1">
    <location>
        <position position="287"/>
    </location>
    <ligand>
        <name>UDP-N-acetyl-alpha-D-glucosamine</name>
        <dbReference type="ChEBI" id="CHEBI:57705"/>
    </ligand>
</feature>
<evidence type="ECO:0000255" key="1">
    <source>
        <dbReference type="HAMAP-Rule" id="MF_00033"/>
    </source>
</evidence>
<dbReference type="EC" id="2.4.1.227" evidence="1"/>
<dbReference type="EMBL" id="CP000485">
    <property type="protein sequence ID" value="ABK86616.1"/>
    <property type="molecule type" value="Genomic_DNA"/>
</dbReference>
<dbReference type="RefSeq" id="WP_001035081.1">
    <property type="nucleotide sequence ID" value="NC_008600.1"/>
</dbReference>
<dbReference type="SMR" id="A0RHC3"/>
<dbReference type="CAZy" id="GT28">
    <property type="family name" value="Glycosyltransferase Family 28"/>
</dbReference>
<dbReference type="KEGG" id="btl:BALH_3379"/>
<dbReference type="HOGENOM" id="CLU_037404_0_0_9"/>
<dbReference type="UniPathway" id="UPA00219"/>
<dbReference type="GO" id="GO:0005886">
    <property type="term" value="C:plasma membrane"/>
    <property type="evidence" value="ECO:0007669"/>
    <property type="project" value="UniProtKB-SubCell"/>
</dbReference>
<dbReference type="GO" id="GO:0051991">
    <property type="term" value="F:UDP-N-acetyl-D-glucosamine:N-acetylmuramoyl-L-alanyl-D-glutamyl-meso-2,6-diaminopimelyl-D-alanyl-D-alanine-diphosphoundecaprenol 4-beta-N-acetylglucosaminlytransferase activity"/>
    <property type="evidence" value="ECO:0007669"/>
    <property type="project" value="RHEA"/>
</dbReference>
<dbReference type="GO" id="GO:0050511">
    <property type="term" value="F:undecaprenyldiphospho-muramoylpentapeptide beta-N-acetylglucosaminyltransferase activity"/>
    <property type="evidence" value="ECO:0007669"/>
    <property type="project" value="UniProtKB-UniRule"/>
</dbReference>
<dbReference type="GO" id="GO:0005975">
    <property type="term" value="P:carbohydrate metabolic process"/>
    <property type="evidence" value="ECO:0007669"/>
    <property type="project" value="InterPro"/>
</dbReference>
<dbReference type="GO" id="GO:0051301">
    <property type="term" value="P:cell division"/>
    <property type="evidence" value="ECO:0007669"/>
    <property type="project" value="UniProtKB-KW"/>
</dbReference>
<dbReference type="GO" id="GO:0071555">
    <property type="term" value="P:cell wall organization"/>
    <property type="evidence" value="ECO:0007669"/>
    <property type="project" value="UniProtKB-KW"/>
</dbReference>
<dbReference type="GO" id="GO:0030259">
    <property type="term" value="P:lipid glycosylation"/>
    <property type="evidence" value="ECO:0007669"/>
    <property type="project" value="UniProtKB-UniRule"/>
</dbReference>
<dbReference type="GO" id="GO:0009252">
    <property type="term" value="P:peptidoglycan biosynthetic process"/>
    <property type="evidence" value="ECO:0007669"/>
    <property type="project" value="UniProtKB-UniRule"/>
</dbReference>
<dbReference type="GO" id="GO:0008360">
    <property type="term" value="P:regulation of cell shape"/>
    <property type="evidence" value="ECO:0007669"/>
    <property type="project" value="UniProtKB-KW"/>
</dbReference>
<dbReference type="CDD" id="cd03785">
    <property type="entry name" value="GT28_MurG"/>
    <property type="match status" value="1"/>
</dbReference>
<dbReference type="Gene3D" id="3.40.50.2000">
    <property type="entry name" value="Glycogen Phosphorylase B"/>
    <property type="match status" value="2"/>
</dbReference>
<dbReference type="HAMAP" id="MF_00033">
    <property type="entry name" value="MurG"/>
    <property type="match status" value="1"/>
</dbReference>
<dbReference type="InterPro" id="IPR006009">
    <property type="entry name" value="GlcNAc_MurG"/>
</dbReference>
<dbReference type="InterPro" id="IPR007235">
    <property type="entry name" value="Glyco_trans_28_C"/>
</dbReference>
<dbReference type="InterPro" id="IPR004276">
    <property type="entry name" value="GlycoTrans_28_N"/>
</dbReference>
<dbReference type="NCBIfam" id="NF009102">
    <property type="entry name" value="PRK12446.1"/>
    <property type="match status" value="1"/>
</dbReference>
<dbReference type="PANTHER" id="PTHR21015:SF27">
    <property type="entry name" value="UDP-N-ACETYLGLUCOSAMINE--N-ACETYLMURAMYL-(PENTAPEPTIDE) PYROPHOSPHORYL-UNDECAPRENOL N-ACETYLGLUCOSAMINE TRANSFERASE"/>
    <property type="match status" value="1"/>
</dbReference>
<dbReference type="PANTHER" id="PTHR21015">
    <property type="entry name" value="UDP-N-ACETYLGLUCOSAMINE--N-ACETYLMURAMYL-(PENTAPEPTIDE) PYROPHOSPHORYL-UNDECAPRENOL N-ACETYLGLUCOSAMINE TRANSFERASE 1"/>
    <property type="match status" value="1"/>
</dbReference>
<dbReference type="Pfam" id="PF04101">
    <property type="entry name" value="Glyco_tran_28_C"/>
    <property type="match status" value="1"/>
</dbReference>
<dbReference type="Pfam" id="PF03033">
    <property type="entry name" value="Glyco_transf_28"/>
    <property type="match status" value="1"/>
</dbReference>
<dbReference type="SUPFAM" id="SSF53756">
    <property type="entry name" value="UDP-Glycosyltransferase/glycogen phosphorylase"/>
    <property type="match status" value="1"/>
</dbReference>
<sequence length="354" mass="39724">MNKKILFTGGGTAGHVMINMVLIPKFMGKGWGVEYIGSQNGIEKLLVQNVKYNSISTGKLRRYWDWENFKDPFKIIKGCIQSYKLMKRIKPDVIFSAGGFVSVPVVIGAWMNKVPVIIREPDSTLGLANKIALPFTTKLCTTFPQTGENVSNEKKVYVGPIVREEIERGNVLRGRSYCKFQQDKPVLLIMGGSQGAQWINDMVRGSLETLLLNFNIVHMCGKGKVDSSIGMEGYIQFEYIGEELPHILNMASVVVSRAGSTAIFELLFLKKPMLLIPLTNSSSRGDQVLNAEYFSRQGYAEVILQDRVSTNTFIHAVNKLNTNKERYIQNMNGYTKTNDEGIHQLIDIINEVVK</sequence>
<organism>
    <name type="scientific">Bacillus thuringiensis (strain Al Hakam)</name>
    <dbReference type="NCBI Taxonomy" id="412694"/>
    <lineage>
        <taxon>Bacteria</taxon>
        <taxon>Bacillati</taxon>
        <taxon>Bacillota</taxon>
        <taxon>Bacilli</taxon>
        <taxon>Bacillales</taxon>
        <taxon>Bacillaceae</taxon>
        <taxon>Bacillus</taxon>
        <taxon>Bacillus cereus group</taxon>
    </lineage>
</organism>
<protein>
    <recommendedName>
        <fullName evidence="1">UDP-N-acetylglucosamine--N-acetylmuramyl-(pentapeptide) pyrophosphoryl-undecaprenol N-acetylglucosamine transferase 1</fullName>
        <ecNumber evidence="1">2.4.1.227</ecNumber>
    </recommendedName>
    <alternativeName>
        <fullName evidence="1">Undecaprenyl-PP-MurNAc-pentapeptide-UDPGlcNAc GlcNAc transferase 1</fullName>
    </alternativeName>
</protein>
<comment type="function">
    <text evidence="1">Cell wall formation. Catalyzes the transfer of a GlcNAc subunit on undecaprenyl-pyrophosphoryl-MurNAc-pentapeptide (lipid intermediate I) to form undecaprenyl-pyrophosphoryl-MurNAc-(pentapeptide)GlcNAc (lipid intermediate II).</text>
</comment>
<comment type="catalytic activity">
    <reaction evidence="1">
        <text>di-trans,octa-cis-undecaprenyl diphospho-N-acetyl-alpha-D-muramoyl-L-alanyl-D-glutamyl-meso-2,6-diaminopimeloyl-D-alanyl-D-alanine + UDP-N-acetyl-alpha-D-glucosamine = di-trans,octa-cis-undecaprenyl diphospho-[N-acetyl-alpha-D-glucosaminyl-(1-&gt;4)]-N-acetyl-alpha-D-muramoyl-L-alanyl-D-glutamyl-meso-2,6-diaminopimeloyl-D-alanyl-D-alanine + UDP + H(+)</text>
        <dbReference type="Rhea" id="RHEA:31227"/>
        <dbReference type="ChEBI" id="CHEBI:15378"/>
        <dbReference type="ChEBI" id="CHEBI:57705"/>
        <dbReference type="ChEBI" id="CHEBI:58223"/>
        <dbReference type="ChEBI" id="CHEBI:61387"/>
        <dbReference type="ChEBI" id="CHEBI:61388"/>
        <dbReference type="EC" id="2.4.1.227"/>
    </reaction>
</comment>
<comment type="pathway">
    <text evidence="1">Cell wall biogenesis; peptidoglycan biosynthesis.</text>
</comment>
<comment type="subcellular location">
    <subcellularLocation>
        <location evidence="1">Cell membrane</location>
        <topology evidence="1">Peripheral membrane protein</topology>
        <orientation evidence="1">Cytoplasmic side</orientation>
    </subcellularLocation>
</comment>
<comment type="similarity">
    <text evidence="1">Belongs to the glycosyltransferase 28 family. MurG subfamily.</text>
</comment>
<accession>A0RHC3</accession>